<reference key="1">
    <citation type="journal article" date="2000" name="Nature">
        <title>The genome sequence of the thermoacidophilic scavenger Thermoplasma acidophilum.</title>
        <authorList>
            <person name="Ruepp A."/>
            <person name="Graml W."/>
            <person name="Santos-Martinez M.-L."/>
            <person name="Koretke K.K."/>
            <person name="Volker C."/>
            <person name="Mewes H.-W."/>
            <person name="Frishman D."/>
            <person name="Stocker S."/>
            <person name="Lupas A.N."/>
            <person name="Baumeister W."/>
        </authorList>
    </citation>
    <scope>NUCLEOTIDE SEQUENCE [LARGE SCALE GENOMIC DNA]</scope>
    <source>
        <strain>ATCC 25905 / DSM 1728 / JCM 9062 / NBRC 15155 / AMRC-C165</strain>
    </source>
</reference>
<feature type="chain" id="PRO_0000057627" description="Hydroxymethylglutaryl-CoA synthase">
    <location>
        <begin position="1"/>
        <end position="351"/>
    </location>
</feature>
<feature type="active site" description="Proton donor/acceptor" evidence="1">
    <location>
        <position position="80"/>
    </location>
</feature>
<feature type="active site" description="Acyl-thioester intermediate" evidence="1">
    <location>
        <position position="112"/>
    </location>
</feature>
<feature type="active site" description="Proton donor/acceptor" evidence="1">
    <location>
        <position position="234"/>
    </location>
</feature>
<feature type="binding site" evidence="1">
    <location>
        <position position="112"/>
    </location>
    <ligand>
        <name>(3S)-3-hydroxy-3-methylglutaryl-CoA</name>
        <dbReference type="ChEBI" id="CHEBI:43074"/>
    </ligand>
</feature>
<feature type="binding site" evidence="1">
    <location>
        <position position="153"/>
    </location>
    <ligand>
        <name>(3S)-3-hydroxy-3-methylglutaryl-CoA</name>
        <dbReference type="ChEBI" id="CHEBI:43074"/>
    </ligand>
</feature>
<feature type="binding site" evidence="1">
    <location>
        <position position="199"/>
    </location>
    <ligand>
        <name>CoA</name>
        <dbReference type="ChEBI" id="CHEBI:57287"/>
        <note>ligand shared with acetoacetyl-CoA thiolase</note>
    </ligand>
</feature>
<feature type="binding site" evidence="1">
    <location>
        <position position="201"/>
    </location>
    <ligand>
        <name>(3S)-3-hydroxy-3-methylglutaryl-CoA</name>
        <dbReference type="ChEBI" id="CHEBI:43074"/>
    </ligand>
</feature>
<feature type="binding site" evidence="1">
    <location>
        <position position="234"/>
    </location>
    <ligand>
        <name>(3S)-3-hydroxy-3-methylglutaryl-CoA</name>
        <dbReference type="ChEBI" id="CHEBI:43074"/>
    </ligand>
</feature>
<feature type="binding site" evidence="1">
    <location>
        <position position="239"/>
    </location>
    <ligand>
        <name>CoA</name>
        <dbReference type="ChEBI" id="CHEBI:57287"/>
        <note>ligand shared with acetoacetyl-CoA thiolase</note>
    </ligand>
</feature>
<feature type="binding site" evidence="1">
    <location>
        <position position="243"/>
    </location>
    <ligand>
        <name>(3S)-3-hydroxy-3-methylglutaryl-CoA</name>
        <dbReference type="ChEBI" id="CHEBI:43074"/>
    </ligand>
</feature>
<feature type="binding site" evidence="1">
    <location>
        <position position="266"/>
    </location>
    <ligand>
        <name>(3S)-3-hydroxy-3-methylglutaryl-CoA</name>
        <dbReference type="ChEBI" id="CHEBI:43074"/>
    </ligand>
</feature>
<feature type="binding site" evidence="1">
    <location>
        <position position="296"/>
    </location>
    <ligand>
        <name>(3S)-3-hydroxy-3-methylglutaryl-CoA</name>
        <dbReference type="ChEBI" id="CHEBI:43074"/>
    </ligand>
</feature>
<sequence>MSGIVTYGSYIPRYRIKPDEIARVWGENPDHIKNGIYILSKSVPAPDEDVATISVEAARNALKRKKIDPKEIGAIYVGSESHPYAVKPTATIVGSAIGVDFSLFAADYEFACKAGTAGMQNVKAMVDSGMIKYGLAIGADTSQGAPGDALEYSASAGGTAFIIGKDDTIAEINSTLSVASDTPDFWRREGQPYPSHGERFTGEPAYFRHVITAAKMMMERMETQPKDYDYVVFHQPNGKFPTRAAKMLGFEEKQYKDGLLTPYIGNTYSGSMMTGLSSILDVSKPGDHILAVSFGSGAGSDAFDITVTDRIEEMDRNRAPTIKKMLENVKWVDYAIYAKYKKKIIVGDGIE</sequence>
<protein>
    <recommendedName>
        <fullName evidence="1">Hydroxymethylglutaryl-CoA synthase</fullName>
        <shortName evidence="1">HMG-CoA synthase</shortName>
        <shortName evidence="1">HMGCS</shortName>
        <ecNumber evidence="1">2.3.3.10</ecNumber>
    </recommendedName>
</protein>
<keyword id="KW-0012">Acyltransferase</keyword>
<keyword id="KW-0414">Isoprene biosynthesis</keyword>
<keyword id="KW-1185">Reference proteome</keyword>
<keyword id="KW-0808">Transferase</keyword>
<name>HMGCS_THEAC</name>
<proteinExistence type="inferred from homology"/>
<comment type="function">
    <text evidence="1">Catalyzes the condensation of acetyl-CoA with acetoacetyl-CoA to form 3-hydroxy-3-methylglutaryl-CoA (HMG-CoA). Functions in the mevalonate (MVA) pathway leading to isopentenyl diphosphate (IPP), a key precursor for the biosynthesis of isoprenoid compounds that are building blocks of archaeal membrane lipids.</text>
</comment>
<comment type="catalytic activity">
    <reaction evidence="1">
        <text>acetoacetyl-CoA + acetyl-CoA + H2O = (3S)-3-hydroxy-3-methylglutaryl-CoA + CoA + H(+)</text>
        <dbReference type="Rhea" id="RHEA:10188"/>
        <dbReference type="ChEBI" id="CHEBI:15377"/>
        <dbReference type="ChEBI" id="CHEBI:15378"/>
        <dbReference type="ChEBI" id="CHEBI:43074"/>
        <dbReference type="ChEBI" id="CHEBI:57286"/>
        <dbReference type="ChEBI" id="CHEBI:57287"/>
        <dbReference type="ChEBI" id="CHEBI:57288"/>
        <dbReference type="EC" id="2.3.3.10"/>
    </reaction>
    <physiologicalReaction direction="left-to-right" evidence="1">
        <dbReference type="Rhea" id="RHEA:10189"/>
    </physiologicalReaction>
</comment>
<comment type="pathway">
    <text evidence="1">Metabolic intermediate biosynthesis; (R)-mevalonate biosynthesis; (R)-mevalonate from acetyl-CoA: step 2/3.</text>
</comment>
<comment type="subunit">
    <text evidence="1">Interacts with acetoacetyl-CoA thiolase that catalyzes the precedent step in the pathway and with a DUF35 protein. The acetoacetyl-CoA thiolase/HMG-CoA synthase complex channels the intermediate via a fused CoA-binding site, which allows for efficient coupling of the endergonic thiolase reaction with the exergonic HMGCS reaction.</text>
</comment>
<comment type="similarity">
    <text evidence="1">Belongs to the thiolase-like superfamily. Archaeal HMG-CoA synthase family.</text>
</comment>
<evidence type="ECO:0000255" key="1">
    <source>
        <dbReference type="HAMAP-Rule" id="MF_01409"/>
    </source>
</evidence>
<organism>
    <name type="scientific">Thermoplasma acidophilum (strain ATCC 25905 / DSM 1728 / JCM 9062 / NBRC 15155 / AMRC-C165)</name>
    <dbReference type="NCBI Taxonomy" id="273075"/>
    <lineage>
        <taxon>Archaea</taxon>
        <taxon>Methanobacteriati</taxon>
        <taxon>Thermoplasmatota</taxon>
        <taxon>Thermoplasmata</taxon>
        <taxon>Thermoplasmatales</taxon>
        <taxon>Thermoplasmataceae</taxon>
        <taxon>Thermoplasma</taxon>
    </lineage>
</organism>
<accession>Q9HI87</accession>
<gene>
    <name type="ordered locus">Ta1455</name>
</gene>
<dbReference type="EC" id="2.3.3.10" evidence="1"/>
<dbReference type="EMBL" id="AL445067">
    <property type="protein sequence ID" value="CAC12575.1"/>
    <property type="molecule type" value="Genomic_DNA"/>
</dbReference>
<dbReference type="RefSeq" id="WP_010901857.1">
    <property type="nucleotide sequence ID" value="NC_002578.1"/>
</dbReference>
<dbReference type="SMR" id="Q9HI87"/>
<dbReference type="FunCoup" id="Q9HI87">
    <property type="interactions" value="86"/>
</dbReference>
<dbReference type="STRING" id="273075.gene:9572685"/>
<dbReference type="PaxDb" id="273075-Ta1455"/>
<dbReference type="EnsemblBacteria" id="CAC12575">
    <property type="protein sequence ID" value="CAC12575"/>
    <property type="gene ID" value="CAC12575"/>
</dbReference>
<dbReference type="KEGG" id="tac:Ta1455"/>
<dbReference type="eggNOG" id="arCOG01767">
    <property type="taxonomic scope" value="Archaea"/>
</dbReference>
<dbReference type="HOGENOM" id="CLU_039592_7_0_2"/>
<dbReference type="InParanoid" id="Q9HI87"/>
<dbReference type="OrthoDB" id="5812at2157"/>
<dbReference type="UniPathway" id="UPA00058">
    <property type="reaction ID" value="UER00102"/>
</dbReference>
<dbReference type="Proteomes" id="UP000001024">
    <property type="component" value="Chromosome"/>
</dbReference>
<dbReference type="GO" id="GO:0003985">
    <property type="term" value="F:acetyl-CoA C-acetyltransferase activity"/>
    <property type="evidence" value="ECO:0007669"/>
    <property type="project" value="UniProtKB-UniRule"/>
</dbReference>
<dbReference type="GO" id="GO:0004421">
    <property type="term" value="F:hydroxymethylglutaryl-CoA synthase activity"/>
    <property type="evidence" value="ECO:0007669"/>
    <property type="project" value="InterPro"/>
</dbReference>
<dbReference type="GO" id="GO:0010142">
    <property type="term" value="P:farnesyl diphosphate biosynthetic process, mevalonate pathway"/>
    <property type="evidence" value="ECO:0007669"/>
    <property type="project" value="TreeGrafter"/>
</dbReference>
<dbReference type="GO" id="GO:0019287">
    <property type="term" value="P:isopentenyl diphosphate biosynthetic process, mevalonate pathway"/>
    <property type="evidence" value="ECO:0007669"/>
    <property type="project" value="UniProtKB-UniRule"/>
</dbReference>
<dbReference type="CDD" id="cd00827">
    <property type="entry name" value="init_cond_enzymes"/>
    <property type="match status" value="1"/>
</dbReference>
<dbReference type="Gene3D" id="3.40.47.10">
    <property type="match status" value="1"/>
</dbReference>
<dbReference type="HAMAP" id="MF_01409">
    <property type="entry name" value="HMG_CoA_synth_arch"/>
    <property type="match status" value="1"/>
</dbReference>
<dbReference type="InterPro" id="IPR013747">
    <property type="entry name" value="ACP_syn_III_C"/>
</dbReference>
<dbReference type="InterPro" id="IPR004656">
    <property type="entry name" value="HMG_CoA_Synthase"/>
</dbReference>
<dbReference type="InterPro" id="IPR016039">
    <property type="entry name" value="Thiolase-like"/>
</dbReference>
<dbReference type="NCBIfam" id="TIGR00748">
    <property type="entry name" value="HMG_CoA_syn_Arc"/>
    <property type="match status" value="1"/>
</dbReference>
<dbReference type="NCBIfam" id="NF003274">
    <property type="entry name" value="PRK04262.1"/>
    <property type="match status" value="1"/>
</dbReference>
<dbReference type="PANTHER" id="PTHR43323">
    <property type="entry name" value="3-HYDROXY-3-METHYLGLUTARYL COENZYME A SYNTHASE"/>
    <property type="match status" value="1"/>
</dbReference>
<dbReference type="PANTHER" id="PTHR43323:SF2">
    <property type="entry name" value="HYDROXYMETHYLGLUTARYL-COA SYNTHASE"/>
    <property type="match status" value="1"/>
</dbReference>
<dbReference type="Pfam" id="PF08541">
    <property type="entry name" value="ACP_syn_III_C"/>
    <property type="match status" value="1"/>
</dbReference>
<dbReference type="SUPFAM" id="SSF53901">
    <property type="entry name" value="Thiolase-like"/>
    <property type="match status" value="2"/>
</dbReference>